<evidence type="ECO:0000255" key="1">
    <source>
        <dbReference type="HAMAP-Rule" id="MF_00167"/>
    </source>
</evidence>
<accession>P69921</accession>
<accession>Q9X6D6</accession>
<organism>
    <name type="scientific">Pseudomonas syringae pv. tomato (strain ATCC BAA-871 / DC3000)</name>
    <dbReference type="NCBI Taxonomy" id="223283"/>
    <lineage>
        <taxon>Bacteria</taxon>
        <taxon>Pseudomonadati</taxon>
        <taxon>Pseudomonadota</taxon>
        <taxon>Gammaproteobacteria</taxon>
        <taxon>Pseudomonadales</taxon>
        <taxon>Pseudomonadaceae</taxon>
        <taxon>Pseudomonas</taxon>
    </lineage>
</organism>
<sequence length="62" mass="6953">MLILTRRCAESLIIGDGEITVTVLGVKGNQVRIGVNAPKEVAVHREEIYLRIKKEKDEEPSH</sequence>
<name>CSRA2_PSESM</name>
<protein>
    <recommendedName>
        <fullName evidence="1">Translational regulator CsrA 2</fullName>
    </recommendedName>
    <alternativeName>
        <fullName evidence="1">Carbon storage regulator 2</fullName>
    </alternativeName>
</protein>
<comment type="function">
    <text evidence="1">A key translational regulator that binds mRNA to regulate translation initiation and/or mRNA stability. Mediates global changes in gene expression, shifting from rapid growth to stress survival by linking envelope stress, the stringent response and the catabolite repression systems. Usually binds in the 5'-UTR; binding at or near the Shine-Dalgarno sequence prevents ribosome-binding, repressing translation, binding elsewhere in the 5'-UTR can activate translation and/or stabilize the mRNA. Its function is antagonized by small RNA(s).</text>
</comment>
<comment type="subunit">
    <text evidence="1">Homodimer; the beta-strands of each monomer intercalate to form a hydrophobic core, while the alpha-helices form wings that extend away from the core.</text>
</comment>
<comment type="subcellular location">
    <subcellularLocation>
        <location evidence="1">Cytoplasm</location>
    </subcellularLocation>
</comment>
<comment type="similarity">
    <text evidence="1">Belongs to the CsrA/RsmA family.</text>
</comment>
<reference key="1">
    <citation type="journal article" date="2003" name="Proc. Natl. Acad. Sci. U.S.A.">
        <title>The complete genome sequence of the Arabidopsis and tomato pathogen Pseudomonas syringae pv. tomato DC3000.</title>
        <authorList>
            <person name="Buell C.R."/>
            <person name="Joardar V."/>
            <person name="Lindeberg M."/>
            <person name="Selengut J."/>
            <person name="Paulsen I.T."/>
            <person name="Gwinn M.L."/>
            <person name="Dodson R.J."/>
            <person name="DeBoy R.T."/>
            <person name="Durkin A.S."/>
            <person name="Kolonay J.F."/>
            <person name="Madupu R."/>
            <person name="Daugherty S.C."/>
            <person name="Brinkac L.M."/>
            <person name="Beanan M.J."/>
            <person name="Haft D.H."/>
            <person name="Nelson W.C."/>
            <person name="Davidsen T.M."/>
            <person name="Zafar N."/>
            <person name="Zhou L."/>
            <person name="Liu J."/>
            <person name="Yuan Q."/>
            <person name="Khouri H.M."/>
            <person name="Fedorova N.B."/>
            <person name="Tran B."/>
            <person name="Russell D."/>
            <person name="Berry K.J."/>
            <person name="Utterback T.R."/>
            <person name="Van Aken S.E."/>
            <person name="Feldblyum T.V."/>
            <person name="D'Ascenzo M."/>
            <person name="Deng W.-L."/>
            <person name="Ramos A.R."/>
            <person name="Alfano J.R."/>
            <person name="Cartinhour S."/>
            <person name="Chatterjee A.K."/>
            <person name="Delaney T.P."/>
            <person name="Lazarowitz S.G."/>
            <person name="Martin G.B."/>
            <person name="Schneider D.J."/>
            <person name="Tang X."/>
            <person name="Bender C.L."/>
            <person name="White O."/>
            <person name="Fraser C.M."/>
            <person name="Collmer A."/>
        </authorList>
    </citation>
    <scope>NUCLEOTIDE SEQUENCE [LARGE SCALE GENOMIC DNA]</scope>
    <source>
        <strain>ATCC BAA-871 / DC3000</strain>
    </source>
</reference>
<keyword id="KW-0010">Activator</keyword>
<keyword id="KW-0963">Cytoplasm</keyword>
<keyword id="KW-1185">Reference proteome</keyword>
<keyword id="KW-0678">Repressor</keyword>
<keyword id="KW-0694">RNA-binding</keyword>
<keyword id="KW-0810">Translation regulation</keyword>
<proteinExistence type="inferred from homology"/>
<feature type="chain" id="PRO_0000177084" description="Translational regulator CsrA 2">
    <location>
        <begin position="1"/>
        <end position="62"/>
    </location>
</feature>
<dbReference type="EMBL" id="AE016853">
    <property type="protein sequence ID" value="AAO55363.1"/>
    <property type="molecule type" value="Genomic_DNA"/>
</dbReference>
<dbReference type="RefSeq" id="NP_791668.1">
    <property type="nucleotide sequence ID" value="NC_004578.1"/>
</dbReference>
<dbReference type="SMR" id="P69921"/>
<dbReference type="STRING" id="223283.PSPTO_1844"/>
<dbReference type="KEGG" id="pst:PSPTO_1844"/>
<dbReference type="PATRIC" id="fig|223283.9.peg.1873"/>
<dbReference type="eggNOG" id="COG1551">
    <property type="taxonomic scope" value="Bacteria"/>
</dbReference>
<dbReference type="HOGENOM" id="CLU_164837_2_1_6"/>
<dbReference type="OrthoDB" id="9809061at2"/>
<dbReference type="PhylomeDB" id="P69921"/>
<dbReference type="PRO" id="PR:P69921"/>
<dbReference type="Proteomes" id="UP000002515">
    <property type="component" value="Chromosome"/>
</dbReference>
<dbReference type="GO" id="GO:0005829">
    <property type="term" value="C:cytosol"/>
    <property type="evidence" value="ECO:0007669"/>
    <property type="project" value="TreeGrafter"/>
</dbReference>
<dbReference type="GO" id="GO:0048027">
    <property type="term" value="F:mRNA 5'-UTR binding"/>
    <property type="evidence" value="ECO:0007669"/>
    <property type="project" value="UniProtKB-UniRule"/>
</dbReference>
<dbReference type="GO" id="GO:0006402">
    <property type="term" value="P:mRNA catabolic process"/>
    <property type="evidence" value="ECO:0007669"/>
    <property type="project" value="InterPro"/>
</dbReference>
<dbReference type="GO" id="GO:0045947">
    <property type="term" value="P:negative regulation of translational initiation"/>
    <property type="evidence" value="ECO:0007669"/>
    <property type="project" value="UniProtKB-UniRule"/>
</dbReference>
<dbReference type="GO" id="GO:0045948">
    <property type="term" value="P:positive regulation of translational initiation"/>
    <property type="evidence" value="ECO:0007669"/>
    <property type="project" value="UniProtKB-UniRule"/>
</dbReference>
<dbReference type="GO" id="GO:0006109">
    <property type="term" value="P:regulation of carbohydrate metabolic process"/>
    <property type="evidence" value="ECO:0007669"/>
    <property type="project" value="UniProtKB-UniRule"/>
</dbReference>
<dbReference type="FunFam" id="2.60.40.4380:FF:000001">
    <property type="entry name" value="Translational regulator CsrA"/>
    <property type="match status" value="1"/>
</dbReference>
<dbReference type="Gene3D" id="2.60.40.4380">
    <property type="entry name" value="Translational regulator CsrA"/>
    <property type="match status" value="1"/>
</dbReference>
<dbReference type="HAMAP" id="MF_00167">
    <property type="entry name" value="CsrA"/>
    <property type="match status" value="1"/>
</dbReference>
<dbReference type="InterPro" id="IPR003751">
    <property type="entry name" value="CsrA"/>
</dbReference>
<dbReference type="InterPro" id="IPR036107">
    <property type="entry name" value="CsrA_sf"/>
</dbReference>
<dbReference type="NCBIfam" id="TIGR00202">
    <property type="entry name" value="csrA"/>
    <property type="match status" value="1"/>
</dbReference>
<dbReference type="NCBIfam" id="NF002469">
    <property type="entry name" value="PRK01712.1"/>
    <property type="match status" value="1"/>
</dbReference>
<dbReference type="PANTHER" id="PTHR34984">
    <property type="entry name" value="CARBON STORAGE REGULATOR"/>
    <property type="match status" value="1"/>
</dbReference>
<dbReference type="PANTHER" id="PTHR34984:SF1">
    <property type="entry name" value="CARBON STORAGE REGULATOR"/>
    <property type="match status" value="1"/>
</dbReference>
<dbReference type="Pfam" id="PF02599">
    <property type="entry name" value="CsrA"/>
    <property type="match status" value="1"/>
</dbReference>
<dbReference type="SUPFAM" id="SSF117130">
    <property type="entry name" value="CsrA-like"/>
    <property type="match status" value="1"/>
</dbReference>
<gene>
    <name evidence="1" type="primary">csrA2</name>
    <name type="synonym">csrA-2</name>
    <name type="ordered locus">PSPTO_1844</name>
</gene>